<feature type="chain" id="PRO_1000045946" description="Nucleoid-associated protein Sputcn32_2288">
    <location>
        <begin position="1"/>
        <end position="342"/>
    </location>
</feature>
<dbReference type="EMBL" id="CP000681">
    <property type="protein sequence ID" value="ABP76009.1"/>
    <property type="molecule type" value="Genomic_DNA"/>
</dbReference>
<dbReference type="SMR" id="A4Y7S6"/>
<dbReference type="STRING" id="319224.Sputcn32_2288"/>
<dbReference type="KEGG" id="spc:Sputcn32_2288"/>
<dbReference type="eggNOG" id="COG3081">
    <property type="taxonomic scope" value="Bacteria"/>
</dbReference>
<dbReference type="HOGENOM" id="CLU_063050_0_1_6"/>
<dbReference type="GO" id="GO:0043590">
    <property type="term" value="C:bacterial nucleoid"/>
    <property type="evidence" value="ECO:0007669"/>
    <property type="project" value="TreeGrafter"/>
</dbReference>
<dbReference type="GO" id="GO:0005737">
    <property type="term" value="C:cytoplasm"/>
    <property type="evidence" value="ECO:0007669"/>
    <property type="project" value="UniProtKB-UniRule"/>
</dbReference>
<dbReference type="GO" id="GO:0003690">
    <property type="term" value="F:double-stranded DNA binding"/>
    <property type="evidence" value="ECO:0007669"/>
    <property type="project" value="TreeGrafter"/>
</dbReference>
<dbReference type="GO" id="GO:0003727">
    <property type="term" value="F:single-stranded RNA binding"/>
    <property type="evidence" value="ECO:0007669"/>
    <property type="project" value="TreeGrafter"/>
</dbReference>
<dbReference type="HAMAP" id="MF_00730">
    <property type="entry name" value="NdpA"/>
    <property type="match status" value="1"/>
</dbReference>
<dbReference type="InterPro" id="IPR007358">
    <property type="entry name" value="Nucleoid_associated_NdpA"/>
</dbReference>
<dbReference type="NCBIfam" id="NF001557">
    <property type="entry name" value="PRK00378.1"/>
    <property type="match status" value="1"/>
</dbReference>
<dbReference type="PANTHER" id="PTHR38772">
    <property type="match status" value="1"/>
</dbReference>
<dbReference type="PANTHER" id="PTHR38772:SF1">
    <property type="entry name" value="NUCLEOID-ASSOCIATED PROTEIN YEJK"/>
    <property type="match status" value="1"/>
</dbReference>
<dbReference type="Pfam" id="PF04245">
    <property type="entry name" value="NA37"/>
    <property type="match status" value="1"/>
</dbReference>
<protein>
    <recommendedName>
        <fullName evidence="1">Nucleoid-associated protein Sputcn32_2288</fullName>
    </recommendedName>
</protein>
<accession>A4Y7S6</accession>
<organism>
    <name type="scientific">Shewanella putrefaciens (strain CN-32 / ATCC BAA-453)</name>
    <dbReference type="NCBI Taxonomy" id="319224"/>
    <lineage>
        <taxon>Bacteria</taxon>
        <taxon>Pseudomonadati</taxon>
        <taxon>Pseudomonadota</taxon>
        <taxon>Gammaproteobacteria</taxon>
        <taxon>Alteromonadales</taxon>
        <taxon>Shewanellaceae</taxon>
        <taxon>Shewanella</taxon>
    </lineage>
</organism>
<sequence>MSINIEQAIIHEISQDSQGQLRCRLRPQPLLNGQAVEVMLDELHQTYTSKAGKGFGYFGIHGDDGEANPAFANALTQYRAGELGFVEFSGQASKLLQEELAKYDFSQGGFLLMSCYTSITSDYLFVALLSAKSSMTVLDDMELSQNNHLDLNNIQLAARIDLSEWQADKDSRKYISFIRGRAGRKVADFFLDFMGCVEGVNTKAQNKTLMNAVEDFVASSDLTKDERQQCRNKVFEYCSERFDEGADIEIKDLADELADQGMDSFYDFARGGSYDLDEEFPADKSTLRQLKKFSGTGGGVTLSFDGGHLGQRVIYDPISDTILIKGVPANLKDQLDRRLKGE</sequence>
<gene>
    <name type="ordered locus">Sputcn32_2288</name>
</gene>
<evidence type="ECO:0000255" key="1">
    <source>
        <dbReference type="HAMAP-Rule" id="MF_00730"/>
    </source>
</evidence>
<comment type="subcellular location">
    <subcellularLocation>
        <location evidence="1">Cytoplasm</location>
        <location evidence="1">Nucleoid</location>
    </subcellularLocation>
</comment>
<comment type="similarity">
    <text evidence="1">Belongs to the YejK family.</text>
</comment>
<proteinExistence type="inferred from homology"/>
<reference key="1">
    <citation type="submission" date="2007-04" db="EMBL/GenBank/DDBJ databases">
        <title>Complete sequence of Shewanella putrefaciens CN-32.</title>
        <authorList>
            <consortium name="US DOE Joint Genome Institute"/>
            <person name="Copeland A."/>
            <person name="Lucas S."/>
            <person name="Lapidus A."/>
            <person name="Barry K."/>
            <person name="Detter J.C."/>
            <person name="Glavina del Rio T."/>
            <person name="Hammon N."/>
            <person name="Israni S."/>
            <person name="Dalin E."/>
            <person name="Tice H."/>
            <person name="Pitluck S."/>
            <person name="Chain P."/>
            <person name="Malfatti S."/>
            <person name="Shin M."/>
            <person name="Vergez L."/>
            <person name="Schmutz J."/>
            <person name="Larimer F."/>
            <person name="Land M."/>
            <person name="Hauser L."/>
            <person name="Kyrpides N."/>
            <person name="Mikhailova N."/>
            <person name="Romine M.F."/>
            <person name="Fredrickson J."/>
            <person name="Tiedje J."/>
            <person name="Richardson P."/>
        </authorList>
    </citation>
    <scope>NUCLEOTIDE SEQUENCE [LARGE SCALE GENOMIC DNA]</scope>
    <source>
        <strain>CN-32 / ATCC BAA-453</strain>
    </source>
</reference>
<name>NDPA_SHEPC</name>
<keyword id="KW-0963">Cytoplasm</keyword>